<protein>
    <recommendedName>
        <fullName evidence="1">Putative cysteine ligase BshC</fullName>
        <ecNumber evidence="1">6.-.-.-</ecNumber>
    </recommendedName>
</protein>
<evidence type="ECO:0000255" key="1">
    <source>
        <dbReference type="HAMAP-Rule" id="MF_01867"/>
    </source>
</evidence>
<feature type="chain" id="PRO_0000378204" description="Putative cysteine ligase BshC">
    <location>
        <begin position="1"/>
        <end position="532"/>
    </location>
</feature>
<feature type="coiled-coil region" evidence="1">
    <location>
        <begin position="431"/>
        <end position="451"/>
    </location>
</feature>
<comment type="similarity">
    <text evidence="1">Belongs to the BshC family.</text>
</comment>
<dbReference type="EC" id="6.-.-.-" evidence="1"/>
<dbReference type="EMBL" id="CP000360">
    <property type="protein sequence ID" value="ABF41182.1"/>
    <property type="molecule type" value="Genomic_DNA"/>
</dbReference>
<dbReference type="RefSeq" id="WP_011522983.1">
    <property type="nucleotide sequence ID" value="NC_008009.1"/>
</dbReference>
<dbReference type="SMR" id="Q1IPL8"/>
<dbReference type="STRING" id="204669.Acid345_2181"/>
<dbReference type="EnsemblBacteria" id="ABF41182">
    <property type="protein sequence ID" value="ABF41182"/>
    <property type="gene ID" value="Acid345_2181"/>
</dbReference>
<dbReference type="KEGG" id="aba:Acid345_2181"/>
<dbReference type="eggNOG" id="COG4365">
    <property type="taxonomic scope" value="Bacteria"/>
</dbReference>
<dbReference type="HOGENOM" id="CLU_022249_1_0_0"/>
<dbReference type="OrthoDB" id="9765151at2"/>
<dbReference type="Proteomes" id="UP000002432">
    <property type="component" value="Chromosome"/>
</dbReference>
<dbReference type="GO" id="GO:0016874">
    <property type="term" value="F:ligase activity"/>
    <property type="evidence" value="ECO:0007669"/>
    <property type="project" value="UniProtKB-UniRule"/>
</dbReference>
<dbReference type="HAMAP" id="MF_01867">
    <property type="entry name" value="BshC"/>
    <property type="match status" value="1"/>
</dbReference>
<dbReference type="InterPro" id="IPR011199">
    <property type="entry name" value="Bacillithiol_biosynth_BshC"/>
</dbReference>
<dbReference type="InterPro" id="IPR055399">
    <property type="entry name" value="CC_BshC"/>
</dbReference>
<dbReference type="InterPro" id="IPR055398">
    <property type="entry name" value="Rossmann-like_BshC"/>
</dbReference>
<dbReference type="NCBIfam" id="TIGR03998">
    <property type="entry name" value="thiol_BshC"/>
    <property type="match status" value="1"/>
</dbReference>
<dbReference type="Pfam" id="PF24850">
    <property type="entry name" value="CC_BshC"/>
    <property type="match status" value="1"/>
</dbReference>
<dbReference type="Pfam" id="PF10079">
    <property type="entry name" value="Rossmann-like_BshC"/>
    <property type="match status" value="1"/>
</dbReference>
<dbReference type="PIRSF" id="PIRSF012535">
    <property type="entry name" value="UCP012535"/>
    <property type="match status" value="1"/>
</dbReference>
<reference key="1">
    <citation type="journal article" date="2009" name="Appl. Environ. Microbiol.">
        <title>Three genomes from the phylum Acidobacteria provide insight into the lifestyles of these microorganisms in soils.</title>
        <authorList>
            <person name="Ward N.L."/>
            <person name="Challacombe J.F."/>
            <person name="Janssen P.H."/>
            <person name="Henrissat B."/>
            <person name="Coutinho P.M."/>
            <person name="Wu M."/>
            <person name="Xie G."/>
            <person name="Haft D.H."/>
            <person name="Sait M."/>
            <person name="Badger J."/>
            <person name="Barabote R.D."/>
            <person name="Bradley B."/>
            <person name="Brettin T.S."/>
            <person name="Brinkac L.M."/>
            <person name="Bruce D."/>
            <person name="Creasy T."/>
            <person name="Daugherty S.C."/>
            <person name="Davidsen T.M."/>
            <person name="DeBoy R.T."/>
            <person name="Detter J.C."/>
            <person name="Dodson R.J."/>
            <person name="Durkin A.S."/>
            <person name="Ganapathy A."/>
            <person name="Gwinn-Giglio M."/>
            <person name="Han C.S."/>
            <person name="Khouri H."/>
            <person name="Kiss H."/>
            <person name="Kothari S.P."/>
            <person name="Madupu R."/>
            <person name="Nelson K.E."/>
            <person name="Nelson W.C."/>
            <person name="Paulsen I."/>
            <person name="Penn K."/>
            <person name="Ren Q."/>
            <person name="Rosovitz M.J."/>
            <person name="Selengut J.D."/>
            <person name="Shrivastava S."/>
            <person name="Sullivan S.A."/>
            <person name="Tapia R."/>
            <person name="Thompson L.S."/>
            <person name="Watkins K.L."/>
            <person name="Yang Q."/>
            <person name="Yu C."/>
            <person name="Zafar N."/>
            <person name="Zhou L."/>
            <person name="Kuske C.R."/>
        </authorList>
    </citation>
    <scope>NUCLEOTIDE SEQUENCE [LARGE SCALE GENOMIC DNA]</scope>
    <source>
        <strain>Ellin345</strain>
    </source>
</reference>
<gene>
    <name evidence="1" type="primary">bshC</name>
    <name type="ordered locus">Acid345_2181</name>
</gene>
<proteinExistence type="inferred from homology"/>
<organism>
    <name type="scientific">Koribacter versatilis (strain Ellin345)</name>
    <dbReference type="NCBI Taxonomy" id="204669"/>
    <lineage>
        <taxon>Bacteria</taxon>
        <taxon>Pseudomonadati</taxon>
        <taxon>Acidobacteriota</taxon>
        <taxon>Terriglobia</taxon>
        <taxon>Terriglobales</taxon>
        <taxon>Candidatus Korobacteraceae</taxon>
        <taxon>Candidatus Korobacter</taxon>
    </lineage>
</organism>
<accession>Q1IPL8</accession>
<sequence>MIPDCIPLAEVPHTTRLFADYLAHSAKLQAFYPALKYNQNLAAYTSSIQYQPGTRDRVATALQILNERLGASPEALANIERLRRGAYAVVSGQQVGLFGGPLLAVLKAAHAVRLARDLTAQGTDTIPVFWMASEDHDLAEVDHVFLPKNDFSLQRFTADATGTTGAPMSDLRFEPTIENLVQQTSELLGDSSLVDILRESYRPGETVAGAFGKLFARLFAKHGLVLLDPADTELHRIAAPLFRRAVAEAAEIARALVDRGKELEHAGYHEQVKVSASSVLLFGIQDGARVAIQRQNDHFSVGKEKLTQEELLARIDAEPEKFNANVLLRPVMQDTLLPTLAYIGGPAEVAYFAQGSVVYERLLGRATPILPRFSATLIEPKVEKLLEKYDLKFEDINHGADALAEKLAQKTLPPELDEQFRVALATVTQTMAQAKDALAKVDASLVEAAERATSKMRYQVGRLHRRAARAALRRTHVLSQHADLIVNALYPEKELQERTVGAAYFLAKYGLDLVDTLVDAAGTCPEHRVIRV</sequence>
<name>BSHC_KORVE</name>
<keyword id="KW-0175">Coiled coil</keyword>
<keyword id="KW-0436">Ligase</keyword>
<keyword id="KW-1185">Reference proteome</keyword>